<accession>Q9SA75</accession>
<name>SBT21_ARATH</name>
<proteinExistence type="evidence at transcript level"/>
<evidence type="ECO:0000250" key="1">
    <source>
        <dbReference type="UniProtKB" id="Q39547"/>
    </source>
</evidence>
<evidence type="ECO:0000250" key="2">
    <source>
        <dbReference type="UniProtKB" id="Q84WS0"/>
    </source>
</evidence>
<evidence type="ECO:0000250" key="3">
    <source>
        <dbReference type="UniProtKB" id="Q9MAP7"/>
    </source>
</evidence>
<evidence type="ECO:0000255" key="4"/>
<evidence type="ECO:0000255" key="5">
    <source>
        <dbReference type="PROSITE-ProRule" id="PRU00498"/>
    </source>
</evidence>
<evidence type="ECO:0000255" key="6">
    <source>
        <dbReference type="PROSITE-ProRule" id="PRU01240"/>
    </source>
</evidence>
<evidence type="ECO:0000255" key="7">
    <source>
        <dbReference type="PROSITE-ProRule" id="PRU10082"/>
    </source>
</evidence>
<evidence type="ECO:0000303" key="8">
    <source>
    </source>
</evidence>
<evidence type="ECO:0000305" key="9"/>
<evidence type="ECO:0000312" key="10">
    <source>
        <dbReference type="Araport" id="AT1G30600"/>
    </source>
</evidence>
<evidence type="ECO:0000312" key="11">
    <source>
        <dbReference type="EMBL" id="AAD25747.1"/>
    </source>
</evidence>
<feature type="signal peptide" evidence="4">
    <location>
        <begin position="1"/>
        <end position="24"/>
    </location>
</feature>
<feature type="propeptide" id="PRO_0000435180" description="Activation peptide" evidence="3">
    <location>
        <begin position="25"/>
        <end position="138"/>
    </location>
</feature>
<feature type="chain" id="PRO_5004332544" description="Subtilisin-like protease SBT2.1">
    <location>
        <begin position="139"/>
        <end status="unknown"/>
    </location>
</feature>
<feature type="propeptide" id="PRO_0000435181" evidence="1">
    <location>
        <begin status="unknown"/>
        <end position="832"/>
    </location>
</feature>
<feature type="domain" description="Inhibitor I9" evidence="4">
    <location>
        <begin position="36"/>
        <end position="136"/>
    </location>
</feature>
<feature type="domain" description="Peptidase S8" evidence="6">
    <location>
        <begin position="145"/>
        <end position="684"/>
    </location>
</feature>
<feature type="domain" description="PA" evidence="4">
    <location>
        <begin position="408"/>
        <end position="503"/>
    </location>
</feature>
<feature type="active site" description="Charge relay system" evidence="6">
    <location>
        <position position="172"/>
    </location>
</feature>
<feature type="active site" description="Charge relay system" evidence="6">
    <location>
        <position position="247"/>
    </location>
</feature>
<feature type="active site" description="Charge relay system" evidence="6">
    <location>
        <position position="609"/>
    </location>
</feature>
<feature type="glycosylation site" description="N-linked (GlcNAc...) asparagine" evidence="5">
    <location>
        <position position="29"/>
    </location>
</feature>
<feature type="glycosylation site" description="N-linked (GlcNAc...) asparagine" evidence="5">
    <location>
        <position position="73"/>
    </location>
</feature>
<feature type="glycosylation site" description="N-linked (GlcNAc...) asparagine" evidence="5">
    <location>
        <position position="233"/>
    </location>
</feature>
<feature type="glycosylation site" description="N-linked (GlcNAc...) asparagine" evidence="5">
    <location>
        <position position="272"/>
    </location>
</feature>
<feature type="glycosylation site" description="N-linked (GlcNAc...) asparagine" evidence="5">
    <location>
        <position position="315"/>
    </location>
</feature>
<feature type="glycosylation site" description="N-linked (GlcNAc...) asparagine" evidence="5">
    <location>
        <position position="390"/>
    </location>
</feature>
<feature type="glycosylation site" description="N-linked (GlcNAc...) asparagine" evidence="5">
    <location>
        <position position="417"/>
    </location>
</feature>
<feature type="glycosylation site" description="N-linked (GlcNAc...) asparagine" evidence="5">
    <location>
        <position position="470"/>
    </location>
</feature>
<feature type="glycosylation site" description="N-linked (GlcNAc...) asparagine" evidence="5">
    <location>
        <position position="515"/>
    </location>
</feature>
<feature type="glycosylation site" description="N-linked (GlcNAc...) asparagine" evidence="5">
    <location>
        <position position="522"/>
    </location>
</feature>
<feature type="glycosylation site" description="N-linked (GlcNAc...) asparagine" evidence="5">
    <location>
        <position position="679"/>
    </location>
</feature>
<feature type="glycosylation site" description="N-linked (GlcNAc...) asparagine" evidence="5">
    <location>
        <position position="705"/>
    </location>
</feature>
<feature type="glycosylation site" description="N-linked (GlcNAc...) asparagine" evidence="5">
    <location>
        <position position="713"/>
    </location>
</feature>
<feature type="glycosylation site" description="N-linked (GlcNAc...) asparagine" evidence="5">
    <location>
        <position position="723"/>
    </location>
</feature>
<feature type="glycosylation site" description="N-linked (GlcNAc...) asparagine" evidence="5">
    <location>
        <position position="760"/>
    </location>
</feature>
<feature type="glycosylation site" description="N-linked (GlcNAc...) asparagine" evidence="5">
    <location>
        <position position="801"/>
    </location>
</feature>
<dbReference type="EC" id="3.4.21.-" evidence="7"/>
<dbReference type="EMBL" id="AC007060">
    <property type="protein sequence ID" value="AAD25747.1"/>
    <property type="molecule type" value="Genomic_DNA"/>
</dbReference>
<dbReference type="EMBL" id="CP002684">
    <property type="protein sequence ID" value="AEE31248.1"/>
    <property type="molecule type" value="Genomic_DNA"/>
</dbReference>
<dbReference type="EMBL" id="AY072142">
    <property type="protein sequence ID" value="AAL59964.1"/>
    <property type="molecule type" value="mRNA"/>
</dbReference>
<dbReference type="EMBL" id="AY096410">
    <property type="protein sequence ID" value="AAM20050.1"/>
    <property type="molecule type" value="mRNA"/>
</dbReference>
<dbReference type="PIR" id="C86431">
    <property type="entry name" value="C86431"/>
</dbReference>
<dbReference type="RefSeq" id="NP_174348.1">
    <property type="nucleotide sequence ID" value="NM_102797.4"/>
</dbReference>
<dbReference type="SMR" id="Q9SA75"/>
<dbReference type="FunCoup" id="Q9SA75">
    <property type="interactions" value="21"/>
</dbReference>
<dbReference type="STRING" id="3702.Q9SA75"/>
<dbReference type="MEROPS" id="S08.A03"/>
<dbReference type="GlyCosmos" id="Q9SA75">
    <property type="glycosylation" value="16 sites, No reported glycans"/>
</dbReference>
<dbReference type="GlyGen" id="Q9SA75">
    <property type="glycosylation" value="16 sites"/>
</dbReference>
<dbReference type="iPTMnet" id="Q9SA75"/>
<dbReference type="PaxDb" id="3702-AT1G30600.1"/>
<dbReference type="ProteomicsDB" id="232883"/>
<dbReference type="EnsemblPlants" id="AT1G30600.1">
    <property type="protein sequence ID" value="AT1G30600.1"/>
    <property type="gene ID" value="AT1G30600"/>
</dbReference>
<dbReference type="GeneID" id="839940"/>
<dbReference type="Gramene" id="AT1G30600.1">
    <property type="protein sequence ID" value="AT1G30600.1"/>
    <property type="gene ID" value="AT1G30600"/>
</dbReference>
<dbReference type="KEGG" id="ath:AT1G30600"/>
<dbReference type="Araport" id="AT1G30600"/>
<dbReference type="TAIR" id="AT1G30600"/>
<dbReference type="eggNOG" id="ENOG502QSVR">
    <property type="taxonomic scope" value="Eukaryota"/>
</dbReference>
<dbReference type="HOGENOM" id="CLU_000625_3_1_1"/>
<dbReference type="InParanoid" id="Q9SA75"/>
<dbReference type="OMA" id="GWMAPDS"/>
<dbReference type="OrthoDB" id="206201at2759"/>
<dbReference type="PhylomeDB" id="Q9SA75"/>
<dbReference type="PRO" id="PR:Q9SA75"/>
<dbReference type="Proteomes" id="UP000006548">
    <property type="component" value="Chromosome 1"/>
</dbReference>
<dbReference type="ExpressionAtlas" id="Q9SA75">
    <property type="expression patterns" value="baseline and differential"/>
</dbReference>
<dbReference type="GO" id="GO:0005576">
    <property type="term" value="C:extracellular region"/>
    <property type="evidence" value="ECO:0007669"/>
    <property type="project" value="UniProtKB-SubCell"/>
</dbReference>
<dbReference type="GO" id="GO:0009506">
    <property type="term" value="C:plasmodesma"/>
    <property type="evidence" value="ECO:0007005"/>
    <property type="project" value="TAIR"/>
</dbReference>
<dbReference type="GO" id="GO:0004252">
    <property type="term" value="F:serine-type endopeptidase activity"/>
    <property type="evidence" value="ECO:0007669"/>
    <property type="project" value="InterPro"/>
</dbReference>
<dbReference type="GO" id="GO:0006508">
    <property type="term" value="P:proteolysis"/>
    <property type="evidence" value="ECO:0007669"/>
    <property type="project" value="UniProtKB-KW"/>
</dbReference>
<dbReference type="CDD" id="cd02120">
    <property type="entry name" value="PA_subtilisin_like"/>
    <property type="match status" value="1"/>
</dbReference>
<dbReference type="CDD" id="cd04852">
    <property type="entry name" value="Peptidases_S8_3"/>
    <property type="match status" value="1"/>
</dbReference>
<dbReference type="FunFam" id="3.40.50.200:FF:000006">
    <property type="entry name" value="Subtilisin-like protease SBT1.5"/>
    <property type="match status" value="1"/>
</dbReference>
<dbReference type="FunFam" id="2.60.40.2310:FF:000005">
    <property type="entry name" value="Subtilisin-like protease SBT2.1"/>
    <property type="match status" value="1"/>
</dbReference>
<dbReference type="Gene3D" id="2.60.40.2310">
    <property type="match status" value="1"/>
</dbReference>
<dbReference type="Gene3D" id="3.50.30.30">
    <property type="match status" value="1"/>
</dbReference>
<dbReference type="Gene3D" id="3.30.70.80">
    <property type="entry name" value="Peptidase S8 propeptide/proteinase inhibitor I9"/>
    <property type="match status" value="1"/>
</dbReference>
<dbReference type="Gene3D" id="3.40.50.200">
    <property type="entry name" value="Peptidase S8/S53 domain"/>
    <property type="match status" value="1"/>
</dbReference>
<dbReference type="InterPro" id="IPR000209">
    <property type="entry name" value="Peptidase_S8/S53_dom"/>
</dbReference>
<dbReference type="InterPro" id="IPR036852">
    <property type="entry name" value="Peptidase_S8/S53_dom_sf"/>
</dbReference>
<dbReference type="InterPro" id="IPR023827">
    <property type="entry name" value="Peptidase_S8_Asp-AS"/>
</dbReference>
<dbReference type="InterPro" id="IPR023828">
    <property type="entry name" value="Peptidase_S8_Ser-AS"/>
</dbReference>
<dbReference type="InterPro" id="IPR015500">
    <property type="entry name" value="Peptidase_S8_subtilisin-rel"/>
</dbReference>
<dbReference type="InterPro" id="IPR034197">
    <property type="entry name" value="Peptidases_S8_3"/>
</dbReference>
<dbReference type="InterPro" id="IPR010259">
    <property type="entry name" value="S8pro/Inhibitor_I9"/>
</dbReference>
<dbReference type="InterPro" id="IPR037045">
    <property type="entry name" value="S8pro/Inhibitor_I9_sf"/>
</dbReference>
<dbReference type="InterPro" id="IPR045051">
    <property type="entry name" value="SBT"/>
</dbReference>
<dbReference type="InterPro" id="IPR041469">
    <property type="entry name" value="Subtilisin-like_FN3"/>
</dbReference>
<dbReference type="PANTHER" id="PTHR10795">
    <property type="entry name" value="PROPROTEIN CONVERTASE SUBTILISIN/KEXIN"/>
    <property type="match status" value="1"/>
</dbReference>
<dbReference type="Pfam" id="PF17766">
    <property type="entry name" value="fn3_6"/>
    <property type="match status" value="1"/>
</dbReference>
<dbReference type="Pfam" id="PF05922">
    <property type="entry name" value="Inhibitor_I9"/>
    <property type="match status" value="1"/>
</dbReference>
<dbReference type="Pfam" id="PF00082">
    <property type="entry name" value="Peptidase_S8"/>
    <property type="match status" value="1"/>
</dbReference>
<dbReference type="PRINTS" id="PR00723">
    <property type="entry name" value="SUBTILISIN"/>
</dbReference>
<dbReference type="SUPFAM" id="SSF52743">
    <property type="entry name" value="Subtilisin-like"/>
    <property type="match status" value="1"/>
</dbReference>
<dbReference type="PROSITE" id="PS51892">
    <property type="entry name" value="SUBTILASE"/>
    <property type="match status" value="1"/>
</dbReference>
<dbReference type="PROSITE" id="PS00136">
    <property type="entry name" value="SUBTILASE_ASP"/>
    <property type="match status" value="1"/>
</dbReference>
<dbReference type="PROSITE" id="PS00138">
    <property type="entry name" value="SUBTILASE_SER"/>
    <property type="match status" value="1"/>
</dbReference>
<sequence length="832" mass="88545">MDESSLVRFVFLLCLVSSSVFCLAESDQNATVSSAVYIVTLKDRPSVHFSGRESSDSKHSLTATSSQIYRTLNRSASIIRVHDSLLRNVLRKENYLKLYSYHYLINGFSAVLTRKQADRLAAREEVENVVLDFLVEKATTHTPQFLGLPRGAWLRDGGSEYAGEGVVIGFIDTGIDPTHPSFSDKISGHTYSVPPHFTGVCEVTIGFPPGSCNRKLIGARHFAESALSRGVLNSSQDDASPFDGEGHGTHTASVAAGNHGIPVVVAGHRLGNASGMAPRAHIAIYKALYKRFGGFAADIIAAIDQAAQDGVDIINLSITPNRRPPGIATFFNPIDMALLSAVKAGIFVVQAAGNTGPAPKSMSSFSPWIFTVGATSHDRVYSNSIILGNNVTIPGVGLASGTRIMHKLVLATHALRNGTTVMDAIYVGECQDSSSFDQKLVQGKILVCSYTVRFILGVSTIKQALLTAKNLTAAGLVFYIDPSATGFQMTSSPMDIPGILISSPQDSQALLRYYNSSLLRENGSGKIVGSASVAKIVGGMRPTYGITAPKVMYFSARGPDPEDDSFVDADIMKPNLVAPGNAIWGAWSPLGIGTNDFQGERFAMESGTSMSAPHVTGIAALIKQKFPHFTPAAIASALSTTASLSDRKGEHIMAQRTVLNPDISQSPATPFDMGSGFVNATAALDPGLIFDIGYNEYMKFLCGINGSSPVVLNYTGESCSSYNSSLAASDLNLPSVTIAKLVGTRAVLRWVTNIATTATNETYIVGWMAPDSVSVKVSPAKFTIGNGQTRVLSLVFRAMKNVSMASFGRIGLFGDRGHVVNIPVAVIYKIAV</sequence>
<protein>
    <recommendedName>
        <fullName evidence="8">Subtilisin-like protease SBT2.1</fullName>
        <ecNumber evidence="7">3.4.21.-</ecNumber>
    </recommendedName>
    <alternativeName>
        <fullName evidence="8">Subtilase subfamily 2 member 1</fullName>
        <shortName evidence="8">AtSBT2.1</shortName>
    </alternativeName>
</protein>
<gene>
    <name evidence="8" type="primary">SBT2.1</name>
    <name evidence="10" type="ordered locus">At1g30600</name>
    <name evidence="11" type="ORF">T5I8.5</name>
</gene>
<keyword id="KW-0068">Autocatalytic cleavage</keyword>
<keyword id="KW-0325">Glycoprotein</keyword>
<keyword id="KW-0378">Hydrolase</keyword>
<keyword id="KW-0645">Protease</keyword>
<keyword id="KW-1185">Reference proteome</keyword>
<keyword id="KW-0964">Secreted</keyword>
<keyword id="KW-0720">Serine protease</keyword>
<keyword id="KW-0732">Signal</keyword>
<keyword id="KW-0865">Zymogen</keyword>
<reference key="1">
    <citation type="journal article" date="2000" name="Nature">
        <title>Sequence and analysis of chromosome 1 of the plant Arabidopsis thaliana.</title>
        <authorList>
            <person name="Theologis A."/>
            <person name="Ecker J.R."/>
            <person name="Palm C.J."/>
            <person name="Federspiel N.A."/>
            <person name="Kaul S."/>
            <person name="White O."/>
            <person name="Alonso J."/>
            <person name="Altafi H."/>
            <person name="Araujo R."/>
            <person name="Bowman C.L."/>
            <person name="Brooks S.Y."/>
            <person name="Buehler E."/>
            <person name="Chan A."/>
            <person name="Chao Q."/>
            <person name="Chen H."/>
            <person name="Cheuk R.F."/>
            <person name="Chin C.W."/>
            <person name="Chung M.K."/>
            <person name="Conn L."/>
            <person name="Conway A.B."/>
            <person name="Conway A.R."/>
            <person name="Creasy T.H."/>
            <person name="Dewar K."/>
            <person name="Dunn P."/>
            <person name="Etgu P."/>
            <person name="Feldblyum T.V."/>
            <person name="Feng J.-D."/>
            <person name="Fong B."/>
            <person name="Fujii C.Y."/>
            <person name="Gill J.E."/>
            <person name="Goldsmith A.D."/>
            <person name="Haas B."/>
            <person name="Hansen N.F."/>
            <person name="Hughes B."/>
            <person name="Huizar L."/>
            <person name="Hunter J.L."/>
            <person name="Jenkins J."/>
            <person name="Johnson-Hopson C."/>
            <person name="Khan S."/>
            <person name="Khaykin E."/>
            <person name="Kim C.J."/>
            <person name="Koo H.L."/>
            <person name="Kremenetskaia I."/>
            <person name="Kurtz D.B."/>
            <person name="Kwan A."/>
            <person name="Lam B."/>
            <person name="Langin-Hooper S."/>
            <person name="Lee A."/>
            <person name="Lee J.M."/>
            <person name="Lenz C.A."/>
            <person name="Li J.H."/>
            <person name="Li Y.-P."/>
            <person name="Lin X."/>
            <person name="Liu S.X."/>
            <person name="Liu Z.A."/>
            <person name="Luros J.S."/>
            <person name="Maiti R."/>
            <person name="Marziali A."/>
            <person name="Militscher J."/>
            <person name="Miranda M."/>
            <person name="Nguyen M."/>
            <person name="Nierman W.C."/>
            <person name="Osborne B.I."/>
            <person name="Pai G."/>
            <person name="Peterson J."/>
            <person name="Pham P.K."/>
            <person name="Rizzo M."/>
            <person name="Rooney T."/>
            <person name="Rowley D."/>
            <person name="Sakano H."/>
            <person name="Salzberg S.L."/>
            <person name="Schwartz J.R."/>
            <person name="Shinn P."/>
            <person name="Southwick A.M."/>
            <person name="Sun H."/>
            <person name="Tallon L.J."/>
            <person name="Tambunga G."/>
            <person name="Toriumi M.J."/>
            <person name="Town C.D."/>
            <person name="Utterback T."/>
            <person name="Van Aken S."/>
            <person name="Vaysberg M."/>
            <person name="Vysotskaia V.S."/>
            <person name="Walker M."/>
            <person name="Wu D."/>
            <person name="Yu G."/>
            <person name="Fraser C.M."/>
            <person name="Venter J.C."/>
            <person name="Davis R.W."/>
        </authorList>
    </citation>
    <scope>NUCLEOTIDE SEQUENCE [LARGE SCALE GENOMIC DNA]</scope>
    <source>
        <strain>cv. Columbia</strain>
    </source>
</reference>
<reference key="2">
    <citation type="journal article" date="2017" name="Plant J.">
        <title>Araport11: a complete reannotation of the Arabidopsis thaliana reference genome.</title>
        <authorList>
            <person name="Cheng C.Y."/>
            <person name="Krishnakumar V."/>
            <person name="Chan A.P."/>
            <person name="Thibaud-Nissen F."/>
            <person name="Schobel S."/>
            <person name="Town C.D."/>
        </authorList>
    </citation>
    <scope>GENOME REANNOTATION</scope>
    <source>
        <strain>cv. Columbia</strain>
    </source>
</reference>
<reference key="3">
    <citation type="journal article" date="2003" name="Science">
        <title>Empirical analysis of transcriptional activity in the Arabidopsis genome.</title>
        <authorList>
            <person name="Yamada K."/>
            <person name="Lim J."/>
            <person name="Dale J.M."/>
            <person name="Chen H."/>
            <person name="Shinn P."/>
            <person name="Palm C.J."/>
            <person name="Southwick A.M."/>
            <person name="Wu H.C."/>
            <person name="Kim C.J."/>
            <person name="Nguyen M."/>
            <person name="Pham P.K."/>
            <person name="Cheuk R.F."/>
            <person name="Karlin-Newmann G."/>
            <person name="Liu S.X."/>
            <person name="Lam B."/>
            <person name="Sakano H."/>
            <person name="Wu T."/>
            <person name="Yu G."/>
            <person name="Miranda M."/>
            <person name="Quach H.L."/>
            <person name="Tripp M."/>
            <person name="Chang C.H."/>
            <person name="Lee J.M."/>
            <person name="Toriumi M.J."/>
            <person name="Chan M.M."/>
            <person name="Tang C.C."/>
            <person name="Onodera C.S."/>
            <person name="Deng J.M."/>
            <person name="Akiyama K."/>
            <person name="Ansari Y."/>
            <person name="Arakawa T."/>
            <person name="Banh J."/>
            <person name="Banno F."/>
            <person name="Bowser L."/>
            <person name="Brooks S.Y."/>
            <person name="Carninci P."/>
            <person name="Chao Q."/>
            <person name="Choy N."/>
            <person name="Enju A."/>
            <person name="Goldsmith A.D."/>
            <person name="Gurjal M."/>
            <person name="Hansen N.F."/>
            <person name="Hayashizaki Y."/>
            <person name="Johnson-Hopson C."/>
            <person name="Hsuan V.W."/>
            <person name="Iida K."/>
            <person name="Karnes M."/>
            <person name="Khan S."/>
            <person name="Koesema E."/>
            <person name="Ishida J."/>
            <person name="Jiang P.X."/>
            <person name="Jones T."/>
            <person name="Kawai J."/>
            <person name="Kamiya A."/>
            <person name="Meyers C."/>
            <person name="Nakajima M."/>
            <person name="Narusaka M."/>
            <person name="Seki M."/>
            <person name="Sakurai T."/>
            <person name="Satou M."/>
            <person name="Tamse R."/>
            <person name="Vaysberg M."/>
            <person name="Wallender E.K."/>
            <person name="Wong C."/>
            <person name="Yamamura Y."/>
            <person name="Yuan S."/>
            <person name="Shinozaki K."/>
            <person name="Davis R.W."/>
            <person name="Theologis A."/>
            <person name="Ecker J.R."/>
        </authorList>
    </citation>
    <scope>NUCLEOTIDE SEQUENCE [LARGE SCALE MRNA]</scope>
    <source>
        <strain>cv. Columbia</strain>
    </source>
</reference>
<reference key="4">
    <citation type="journal article" date="2005" name="PLoS Comput. Biol.">
        <title>Inferring hypotheses on functional relationships of genes: Analysis of the Arabidopsis thaliana subtilase gene family.</title>
        <authorList>
            <person name="Rautengarten C."/>
            <person name="Steinhauser D."/>
            <person name="Bussis D."/>
            <person name="Stintzi A."/>
            <person name="Schaller A."/>
            <person name="Kopka J."/>
            <person name="Altmann T."/>
        </authorList>
    </citation>
    <scope>GENE FAMILY</scope>
    <scope>NOMENCLATURE</scope>
</reference>
<organism>
    <name type="scientific">Arabidopsis thaliana</name>
    <name type="common">Mouse-ear cress</name>
    <dbReference type="NCBI Taxonomy" id="3702"/>
    <lineage>
        <taxon>Eukaryota</taxon>
        <taxon>Viridiplantae</taxon>
        <taxon>Streptophyta</taxon>
        <taxon>Embryophyta</taxon>
        <taxon>Tracheophyta</taxon>
        <taxon>Spermatophyta</taxon>
        <taxon>Magnoliopsida</taxon>
        <taxon>eudicotyledons</taxon>
        <taxon>Gunneridae</taxon>
        <taxon>Pentapetalae</taxon>
        <taxon>rosids</taxon>
        <taxon>malvids</taxon>
        <taxon>Brassicales</taxon>
        <taxon>Brassicaceae</taxon>
        <taxon>Camelineae</taxon>
        <taxon>Arabidopsis</taxon>
    </lineage>
</organism>
<comment type="subcellular location">
    <subcellularLocation>
        <location evidence="2">Secreted</location>
    </subcellularLocation>
</comment>
<comment type="similarity">
    <text evidence="9">Belongs to the peptidase S8 family.</text>
</comment>